<accession>A3RF67</accession>
<name>BAGBG_DALNI</name>
<feature type="signal peptide" evidence="7">
    <location>
        <begin position="1"/>
        <end position="31"/>
    </location>
</feature>
<feature type="chain" id="PRO_0000398615" description="Isoflavonoid 7-O-beta-apiosyl-glucoside beta-glycosidase" evidence="7">
    <location>
        <begin position="32"/>
        <end position="547"/>
    </location>
</feature>
<feature type="active site" description="Proton donor" evidence="1">
    <location>
        <position position="205"/>
    </location>
</feature>
<feature type="active site" description="Nucleophile" evidence="1">
    <location>
        <position position="419"/>
    </location>
</feature>
<feature type="binding site" evidence="3">
    <location>
        <position position="59"/>
    </location>
    <ligand>
        <name>a beta-D-glucoside</name>
        <dbReference type="ChEBI" id="CHEBI:22798"/>
    </ligand>
</feature>
<feature type="binding site" evidence="3">
    <location>
        <position position="159"/>
    </location>
    <ligand>
        <name>a beta-D-glucoside</name>
        <dbReference type="ChEBI" id="CHEBI:22798"/>
    </ligand>
</feature>
<feature type="binding site" evidence="3">
    <location>
        <begin position="204"/>
        <end position="205"/>
    </location>
    <ligand>
        <name>a beta-D-glucoside</name>
        <dbReference type="ChEBI" id="CHEBI:22798"/>
    </ligand>
</feature>
<feature type="binding site" evidence="3">
    <location>
        <position position="348"/>
    </location>
    <ligand>
        <name>a beta-D-glucoside</name>
        <dbReference type="ChEBI" id="CHEBI:22798"/>
    </ligand>
</feature>
<feature type="binding site" evidence="4">
    <location>
        <position position="419"/>
    </location>
    <ligand>
        <name>a beta-D-glucoside</name>
        <dbReference type="ChEBI" id="CHEBI:22798"/>
    </ligand>
</feature>
<feature type="binding site" evidence="3">
    <location>
        <position position="468"/>
    </location>
    <ligand>
        <name>a beta-D-glucoside</name>
        <dbReference type="ChEBI" id="CHEBI:22798"/>
    </ligand>
</feature>
<feature type="binding site" evidence="3">
    <location>
        <begin position="475"/>
        <end position="476"/>
    </location>
    <ligand>
        <name>a beta-D-glucoside</name>
        <dbReference type="ChEBI" id="CHEBI:22798"/>
    </ligand>
</feature>
<feature type="binding site" evidence="2">
    <location>
        <position position="484"/>
    </location>
    <ligand>
        <name>a beta-D-glucoside</name>
        <dbReference type="ChEBI" id="CHEBI:22798"/>
    </ligand>
</feature>
<feature type="glycosylation site" description="N-linked (GlcNAc...) asparagine" evidence="6">
    <location>
        <position position="72"/>
    </location>
</feature>
<feature type="glycosylation site" description="N-linked (GlcNAc...) asparagine" evidence="6">
    <location>
        <position position="132"/>
    </location>
</feature>
<feature type="glycosylation site" description="N-linked (GlcNAc...) asparagine" evidence="6">
    <location>
        <position position="175"/>
    </location>
</feature>
<feature type="glycosylation site" description="N-linked (GlcNAc...) asparagine" evidence="6">
    <location>
        <position position="285"/>
    </location>
</feature>
<feature type="glycosylation site" description="N-linked (GlcNAc...) asparagine" evidence="6">
    <location>
        <position position="490"/>
    </location>
</feature>
<feature type="disulfide bond" evidence="1">
    <location>
        <begin position="224"/>
        <end position="232"/>
    </location>
</feature>
<feature type="sequence conflict" description="In Ref. 2; AA sequence." evidence="9" ref="2">
    <original>L</original>
    <variation>T</variation>
    <location>
        <position position="146"/>
    </location>
</feature>
<feature type="sequence conflict" description="In Ref. 2; AA sequence." evidence="9" ref="2">
    <original>D</original>
    <variation>G</variation>
    <location>
        <position position="150"/>
    </location>
</feature>
<proteinExistence type="evidence at protein level"/>
<reference evidence="10" key="1">
    <citation type="submission" date="2007-01" db="EMBL/GenBank/DDBJ databases">
        <title>Functional and structural differences between isoflavonoid beta-glycosidase from Dalbergia sp.</title>
        <authorList>
            <person name="Chuankhayan P."/>
            <person name="Svasti J."/>
            <person name="Sullivan P.A."/>
            <person name="Ketudat-Cairns J.R."/>
        </authorList>
    </citation>
    <scope>NUCLEOTIDE SEQUENCE [MRNA]</scope>
    <source>
        <tissue>Seed</tissue>
    </source>
</reference>
<reference evidence="9" key="2">
    <citation type="journal article" date="2005" name="Phytochemistry">
        <title>Purification of an isoflavonoid 7-O-beta-apiosyl-glucoside beta-glycosidase and its substrates from Dalbergia nigrescens Kurz.</title>
        <authorList>
            <person name="Chuankhayan P."/>
            <person name="Hua Y."/>
            <person name="Svasti J."/>
            <person name="Sakdarat S."/>
            <person name="Sullivan P.A."/>
            <person name="Ketudat Cairns J.R."/>
        </authorList>
    </citation>
    <scope>PROTEIN SEQUENCE OF 32-37; 106-113; 127-137; 142-151 AND 199-223</scope>
    <scope>FUNCTION</scope>
    <scope>CATALYTIC ACTIVITY</scope>
    <scope>ACTIVITY REGULATION</scope>
    <scope>BIOPHYSICOCHEMICAL PROPERTIES</scope>
    <scope>SUBUNIT</scope>
    <source>
        <tissue evidence="7">Seed</tissue>
    </source>
</reference>
<protein>
    <recommendedName>
        <fullName evidence="8">Isoflavonoid 7-O-beta-apiosyl-glucoside beta-glycosidase</fullName>
        <ecNumber evidence="7">3.2.1.161</ecNumber>
    </recommendedName>
    <alternativeName>
        <fullName evidence="10">Beta-glycosidase</fullName>
    </alternativeName>
</protein>
<comment type="function">
    <text evidence="7">Hydrolyzes dalpatein 7-O-beta-D-apiofuranosyl-(1-&gt;6)-beta-D-glucopyranoside and dalnigrein 7-O-beta-D-apiofuranosyl-(1-&gt;6)-beta-D-glucopyranoside. Also has activity towards pNP-beta-D-fucoside and pNP-beta-D-glucoside, but not pNP-beta-cellobioside.</text>
</comment>
<comment type="catalytic activity">
    <reaction evidence="7">
        <text>7-[beta-D-apiofuranosyl-(1-&gt;6)-beta-D-glucopyranosyloxy]isoflavonoid + H2O = a 7-hydroxyisoflavonoid + beta-D-apiofuranosyl-(1-&gt;6)-D-glucose.</text>
        <dbReference type="EC" id="3.2.1.161"/>
    </reaction>
</comment>
<comment type="activity regulation">
    <text evidence="7">Not inhibited by iron, calcium, mercury, manganese, zinc or EDTA.</text>
</comment>
<comment type="biophysicochemical properties">
    <kinetics>
        <KM evidence="7">14.7 mM for pNP-beta-D-glucoside</KM>
        <KM evidence="7">1.8 mM for pNP-beta-D-fucoside</KM>
        <KM evidence="7">0.5 mM for dalpatein 7-O-beta-D-apiofuranosyl-(1-&gt;6)-beta-D-glucopyranoside</KM>
        <KM evidence="7">0.7 mM for dalnigrein 7-O-beta-D-apiofuranosyl-(1-&gt;6)-beta-D-glucopyranoside</KM>
        <KM evidence="7">0.11 mM for daidzin</KM>
        <KM evidence="7">0.09 mM for genistin</KM>
    </kinetics>
    <phDependence>
        <text evidence="7">Optimum pH is 5.0-6.0. Half maximum activity is seen at pH 3.5 and 6.5.</text>
    </phDependence>
    <temperatureDependence>
        <text evidence="7">Optimum temperature is 65 degrees Celsius.</text>
    </temperatureDependence>
</comment>
<comment type="subunit">
    <text evidence="7">Homotetramer.</text>
</comment>
<comment type="similarity">
    <text evidence="5">Belongs to the glycosyl hydrolase 1 family.</text>
</comment>
<dbReference type="EC" id="3.2.1.161" evidence="7"/>
<dbReference type="EMBL" id="EF392846">
    <property type="protein sequence ID" value="ABN70849.1"/>
    <property type="molecule type" value="mRNA"/>
</dbReference>
<dbReference type="SMR" id="A3RF67"/>
<dbReference type="CAZy" id="GH1">
    <property type="family name" value="Glycoside Hydrolase Family 1"/>
</dbReference>
<dbReference type="BioCyc" id="MetaCyc:MONOMER-13779"/>
<dbReference type="BRENDA" id="3.2.1.161">
    <property type="organism ID" value="8018"/>
</dbReference>
<dbReference type="SABIO-RK" id="A3RF67"/>
<dbReference type="GO" id="GO:0033956">
    <property type="term" value="F:beta-apiosyl-beta-glucosidase activity"/>
    <property type="evidence" value="ECO:0007669"/>
    <property type="project" value="UniProtKB-EC"/>
</dbReference>
<dbReference type="GO" id="GO:0005975">
    <property type="term" value="P:carbohydrate metabolic process"/>
    <property type="evidence" value="ECO:0007669"/>
    <property type="project" value="InterPro"/>
</dbReference>
<dbReference type="FunFam" id="3.20.20.80:FF:000020">
    <property type="entry name" value="Beta-glucosidase 12"/>
    <property type="match status" value="1"/>
</dbReference>
<dbReference type="Gene3D" id="3.20.20.80">
    <property type="entry name" value="Glycosidases"/>
    <property type="match status" value="1"/>
</dbReference>
<dbReference type="InterPro" id="IPR001360">
    <property type="entry name" value="Glyco_hydro_1"/>
</dbReference>
<dbReference type="InterPro" id="IPR017853">
    <property type="entry name" value="Glycoside_hydrolase_SF"/>
</dbReference>
<dbReference type="PANTHER" id="PTHR10353">
    <property type="entry name" value="GLYCOSYL HYDROLASE"/>
    <property type="match status" value="1"/>
</dbReference>
<dbReference type="PANTHER" id="PTHR10353:SF137">
    <property type="entry name" value="MYROSINASE 3-RELATED"/>
    <property type="match status" value="1"/>
</dbReference>
<dbReference type="Pfam" id="PF00232">
    <property type="entry name" value="Glyco_hydro_1"/>
    <property type="match status" value="1"/>
</dbReference>
<dbReference type="PRINTS" id="PR00131">
    <property type="entry name" value="GLHYDRLASE1"/>
</dbReference>
<dbReference type="SUPFAM" id="SSF51445">
    <property type="entry name" value="(Trans)glycosidases"/>
    <property type="match status" value="1"/>
</dbReference>
<organism>
    <name type="scientific">Dalbergia nigrescens</name>
    <name type="common">Thai blackwood</name>
    <dbReference type="NCBI Taxonomy" id="298683"/>
    <lineage>
        <taxon>Eukaryota</taxon>
        <taxon>Viridiplantae</taxon>
        <taxon>Streptophyta</taxon>
        <taxon>Embryophyta</taxon>
        <taxon>Tracheophyta</taxon>
        <taxon>Spermatophyta</taxon>
        <taxon>Magnoliopsida</taxon>
        <taxon>eudicotyledons</taxon>
        <taxon>Gunneridae</taxon>
        <taxon>Pentapetalae</taxon>
        <taxon>rosids</taxon>
        <taxon>fabids</taxon>
        <taxon>Fabales</taxon>
        <taxon>Fabaceae</taxon>
        <taxon>Papilionoideae</taxon>
        <taxon>50 kb inversion clade</taxon>
        <taxon>dalbergioids sensu lato</taxon>
        <taxon>Dalbergieae</taxon>
        <taxon>Dalbergia clade</taxon>
        <taxon>Dalbergia</taxon>
    </lineage>
</organism>
<evidence type="ECO:0000250" key="1">
    <source>
        <dbReference type="UniProtKB" id="P26205"/>
    </source>
</evidence>
<evidence type="ECO:0000250" key="2">
    <source>
        <dbReference type="UniProtKB" id="Q1XH05"/>
    </source>
</evidence>
<evidence type="ECO:0000250" key="3">
    <source>
        <dbReference type="UniProtKB" id="Q7XSK0"/>
    </source>
</evidence>
<evidence type="ECO:0000250" key="4">
    <source>
        <dbReference type="UniProtKB" id="Q9SPP9"/>
    </source>
</evidence>
<evidence type="ECO:0000255" key="5"/>
<evidence type="ECO:0000255" key="6">
    <source>
        <dbReference type="PROSITE-ProRule" id="PRU00498"/>
    </source>
</evidence>
<evidence type="ECO:0000269" key="7">
    <source>
    </source>
</evidence>
<evidence type="ECO:0000303" key="8">
    <source>
    </source>
</evidence>
<evidence type="ECO:0000305" key="9"/>
<evidence type="ECO:0000312" key="10">
    <source>
        <dbReference type="EMBL" id="ABN70849.1"/>
    </source>
</evidence>
<keyword id="KW-0903">Direct protein sequencing</keyword>
<keyword id="KW-1015">Disulfide bond</keyword>
<keyword id="KW-0325">Glycoprotein</keyword>
<keyword id="KW-0326">Glycosidase</keyword>
<keyword id="KW-0378">Hydrolase</keyword>
<keyword id="KW-0732">Signal</keyword>
<sequence length="547" mass="61859">MHAMTFKAILLLGLLALVSTSASIAFAKEVRATITEVPPFNRNSFPSDFIFGTAASSYQYEGEGRVPSIWDNFTHQYPEKIADGSNGDVAVDQFHHYKEDVAIMKYMNLDAYRLSISWPRILPTGRASGGINSTGVDYYNRLINELLANDITPFVTIFHWDLPQALEDEYGGFLNHTIVNDFRDYADLCFNLFGDRVKHWITVNEPSIFTMNGYAYGIFAPGRCSPSYNPTCTGGDAGTEPDLVAHNLILSHAATVQVYKKKYQEHQNGIIGISLQIIWAVPLSNSTSDQKAAQRYLDFTGGWFLDPLTAGQYPESMQYLVGDRLPKFTTDEAKLVKGSFDFVGINYYTSSYLTSSDASTCCPPSYLTDSQVTFSSQRNGVFIGPVTPSGWMCIYPKGLRDLLLYIKEKYNNPLVYITENGMDELDDPSQSLEESLIDTYRIDSYYRHLFYVRSAIGSGANVKGFFAWSLLDNFEWNEGFTSRFGLNFVNYTTLTRYHKLSATWFKYFLARDQEIAKLDISAPKARWSSSTMIKEEKRKPKWAIQAF</sequence>